<feature type="chain" id="PRO_0000444453" description="MFS transporter fmqE">
    <location>
        <begin position="1"/>
        <end position="534"/>
    </location>
</feature>
<feature type="transmembrane region" description="Helical" evidence="1">
    <location>
        <begin position="48"/>
        <end position="68"/>
    </location>
</feature>
<feature type="transmembrane region" description="Helical" evidence="1">
    <location>
        <begin position="109"/>
        <end position="129"/>
    </location>
</feature>
<feature type="transmembrane region" description="Helical" evidence="1">
    <location>
        <begin position="136"/>
        <end position="156"/>
    </location>
</feature>
<feature type="transmembrane region" description="Helical" evidence="1">
    <location>
        <begin position="169"/>
        <end position="189"/>
    </location>
</feature>
<feature type="transmembrane region" description="Helical" evidence="1">
    <location>
        <begin position="194"/>
        <end position="214"/>
    </location>
</feature>
<feature type="transmembrane region" description="Helical" evidence="1">
    <location>
        <begin position="228"/>
        <end position="248"/>
    </location>
</feature>
<feature type="transmembrane region" description="Helical" evidence="1">
    <location>
        <begin position="326"/>
        <end position="346"/>
    </location>
</feature>
<feature type="transmembrane region" description="Helical" evidence="1">
    <location>
        <begin position="349"/>
        <end position="369"/>
    </location>
</feature>
<feature type="transmembrane region" description="Helical" evidence="1">
    <location>
        <begin position="379"/>
        <end position="399"/>
    </location>
</feature>
<feature type="transmembrane region" description="Helical" evidence="1">
    <location>
        <begin position="407"/>
        <end position="427"/>
    </location>
</feature>
<feature type="transmembrane region" description="Helical" evidence="1">
    <location>
        <begin position="447"/>
        <end position="467"/>
    </location>
</feature>
<feature type="transmembrane region" description="Helical" evidence="1">
    <location>
        <begin position="478"/>
        <end position="498"/>
    </location>
</feature>
<proteinExistence type="evidence at transcript level"/>
<organism>
    <name type="scientific">Aspergillus fumigatus (strain ATCC MYA-4609 / CBS 101355 / FGSC A1100 / Af293)</name>
    <name type="common">Neosartorya fumigata</name>
    <dbReference type="NCBI Taxonomy" id="330879"/>
    <lineage>
        <taxon>Eukaryota</taxon>
        <taxon>Fungi</taxon>
        <taxon>Dikarya</taxon>
        <taxon>Ascomycota</taxon>
        <taxon>Pezizomycotina</taxon>
        <taxon>Eurotiomycetes</taxon>
        <taxon>Eurotiomycetidae</taxon>
        <taxon>Eurotiales</taxon>
        <taxon>Aspergillaceae</taxon>
        <taxon>Aspergillus</taxon>
        <taxon>Aspergillus subgen. Fumigati</taxon>
    </lineage>
</organism>
<sequence length="534" mass="58071">MPEDKVEAIEHVESSRHDATVNEKAIADFLNAEKEMTTWQAVRAHRRLLLFAAYRVTHLAILPFVCASNYGYDTVSNGSSIAMPAFIMSFGAMNHATGSMYLPSIWTSLWTSMTNLGQALGSLIAGFLAERIGRRWTAVSLAILSIVGTFILVFSSTRGMLLVGKTMNGAVVGGLMAIGTTYAADVAPIKLRGALLQAIVFFGVAMQGVSLGIVRAFILDMRPLAWKIVFGIQWAFATLVLIAAFLVPESPVFYVAHGKHDKAQSALRRLHGSSDQYLHIRYGAIVHALDEERKQQSESVSWAELFKGCNLKRTITIGFIMFSTSAIGVPFLTQNIYFLITVGLNVTSVFDIGIGGFFLGCLFVMLGWLSNEGIGRRRLWLWGLIGNFLCMVTIGALGFSTTKASQLAIAVIMNVLISYGVYATVGVAWTICPEISSHRLRQYSQSVAFIVGAVGGWLFNFITPYMYNVDSGNLGAKTGFVYAGLTVVVAVISWFLVPETAGLSVEDIDRAYEMGTAPRHFKSAKATVSAESGH</sequence>
<keyword id="KW-0968">Cytoplasmic vesicle</keyword>
<keyword id="KW-0472">Membrane</keyword>
<keyword id="KW-1185">Reference proteome</keyword>
<keyword id="KW-0812">Transmembrane</keyword>
<keyword id="KW-1133">Transmembrane helix</keyword>
<gene>
    <name evidence="5" type="primary">fmqE</name>
    <name type="ORF">AFUA_6G12040</name>
</gene>
<accession>Q4WLW9</accession>
<protein>
    <recommendedName>
        <fullName evidence="5">MFS transporter fmqE</fullName>
    </recommendedName>
    <alternativeName>
        <fullName evidence="5">Fumiquinazoline biosynthesis cluster protein E</fullName>
    </alternativeName>
</protein>
<comment type="function">
    <text evidence="2 3 4">MFS transporter; part of the gene cluster that mediates the biosynthesis of the antitumor cytotoxic peptidyl alkaloids fumiquinazolines that confer a dual-usage capability to defend against phagocytes in the environment and animal hosts (PubMed:20804163, PubMed:24612080, PubMed:33705521). Probably involved in fumiquinazolines metabolism and transport (PubMed:24612080).</text>
</comment>
<comment type="subcellular location">
    <subcellularLocation>
        <location evidence="3">Cytoplasmic vesicle membrane</location>
        <topology evidence="1">Multi-pass membrane protein</topology>
    </subcellularLocation>
</comment>
<comment type="induction">
    <text evidence="3">Expression is positively regulated by brlA, a conidiation-specific transcription factor involved in the early stage of asexual development and necessary for conidiophore formation (PubMed:24612080).</text>
</comment>
<comment type="disruption phenotype">
    <text evidence="3">Seems not to affect fumiquinazolines production (PubMed:24612080).</text>
</comment>
<comment type="similarity">
    <text evidence="6">Belongs to the major facilitator superfamily. Sugar transporter (TC 2.A.1.1) family.</text>
</comment>
<name>FMQE_ASPFU</name>
<reference key="1">
    <citation type="journal article" date="2005" name="Nature">
        <title>Genomic sequence of the pathogenic and allergenic filamentous fungus Aspergillus fumigatus.</title>
        <authorList>
            <person name="Nierman W.C."/>
            <person name="Pain A."/>
            <person name="Anderson M.J."/>
            <person name="Wortman J.R."/>
            <person name="Kim H.S."/>
            <person name="Arroyo J."/>
            <person name="Berriman M."/>
            <person name="Abe K."/>
            <person name="Archer D.B."/>
            <person name="Bermejo C."/>
            <person name="Bennett J.W."/>
            <person name="Bowyer P."/>
            <person name="Chen D."/>
            <person name="Collins M."/>
            <person name="Coulsen R."/>
            <person name="Davies R."/>
            <person name="Dyer P.S."/>
            <person name="Farman M.L."/>
            <person name="Fedorova N."/>
            <person name="Fedorova N.D."/>
            <person name="Feldblyum T.V."/>
            <person name="Fischer R."/>
            <person name="Fosker N."/>
            <person name="Fraser A."/>
            <person name="Garcia J.L."/>
            <person name="Garcia M.J."/>
            <person name="Goble A."/>
            <person name="Goldman G.H."/>
            <person name="Gomi K."/>
            <person name="Griffith-Jones S."/>
            <person name="Gwilliam R."/>
            <person name="Haas B.J."/>
            <person name="Haas H."/>
            <person name="Harris D.E."/>
            <person name="Horiuchi H."/>
            <person name="Huang J."/>
            <person name="Humphray S."/>
            <person name="Jimenez J."/>
            <person name="Keller N."/>
            <person name="Khouri H."/>
            <person name="Kitamoto K."/>
            <person name="Kobayashi T."/>
            <person name="Konzack S."/>
            <person name="Kulkarni R."/>
            <person name="Kumagai T."/>
            <person name="Lafton A."/>
            <person name="Latge J.-P."/>
            <person name="Li W."/>
            <person name="Lord A."/>
            <person name="Lu C."/>
            <person name="Majoros W.H."/>
            <person name="May G.S."/>
            <person name="Miller B.L."/>
            <person name="Mohamoud Y."/>
            <person name="Molina M."/>
            <person name="Monod M."/>
            <person name="Mouyna I."/>
            <person name="Mulligan S."/>
            <person name="Murphy L.D."/>
            <person name="O'Neil S."/>
            <person name="Paulsen I."/>
            <person name="Penalva M.A."/>
            <person name="Pertea M."/>
            <person name="Price C."/>
            <person name="Pritchard B.L."/>
            <person name="Quail M.A."/>
            <person name="Rabbinowitsch E."/>
            <person name="Rawlins N."/>
            <person name="Rajandream M.A."/>
            <person name="Reichard U."/>
            <person name="Renauld H."/>
            <person name="Robson G.D."/>
            <person name="Rodriguez de Cordoba S."/>
            <person name="Rodriguez-Pena J.M."/>
            <person name="Ronning C.M."/>
            <person name="Rutter S."/>
            <person name="Salzberg S.L."/>
            <person name="Sanchez M."/>
            <person name="Sanchez-Ferrero J.C."/>
            <person name="Saunders D."/>
            <person name="Seeger K."/>
            <person name="Squares R."/>
            <person name="Squares S."/>
            <person name="Takeuchi M."/>
            <person name="Tekaia F."/>
            <person name="Turner G."/>
            <person name="Vazquez de Aldana C.R."/>
            <person name="Weidman J."/>
            <person name="White O."/>
            <person name="Woodward J.R."/>
            <person name="Yu J.-H."/>
            <person name="Fraser C.M."/>
            <person name="Galagan J.E."/>
            <person name="Asai K."/>
            <person name="Machida M."/>
            <person name="Hall N."/>
            <person name="Barrell B.G."/>
            <person name="Denning D.W."/>
        </authorList>
    </citation>
    <scope>NUCLEOTIDE SEQUENCE [LARGE SCALE GENOMIC DNA]</scope>
    <source>
        <strain>ATCC MYA-4609 / CBS 101355 / FGSC A1100 / Af293</strain>
    </source>
</reference>
<reference key="2">
    <citation type="journal article" date="2010" name="Biochemistry">
        <title>Enzymatic processing of fumiquinazoline F: a tandem oxidative-acylation strategy for the generation of multicyclic scaffolds in fungal indole alkaloid biosynthesis.</title>
        <authorList>
            <person name="Ames B.D."/>
            <person name="Liu X."/>
            <person name="Walsh C.T."/>
        </authorList>
    </citation>
    <scope>FUNCTION</scope>
</reference>
<reference key="3">
    <citation type="journal article" date="2014" name="Cell. Microbiol.">
        <title>Co-ordination between BrlA regulation and secretion of the oxidoreductase FmqD directs selective accumulation of fumiquinazoline C to conidial tissues in Aspergillus fumigatus.</title>
        <authorList>
            <person name="Lim F.Y."/>
            <person name="Ames B."/>
            <person name="Walsh C.T."/>
            <person name="Keller N.P."/>
        </authorList>
    </citation>
    <scope>FUNCTION</scope>
    <scope>INDUCTION</scope>
    <scope>DISRUPTION PHENOTYPE</scope>
    <scope>SUBCELLULAR LOCATION</scope>
</reference>
<reference key="4">
    <citation type="journal article" date="2021" name="Genetics">
        <title>Transcriptional control of the production of Aspergillus fumigatus conidia-borne secondary metabolite fumiquinazoline C important for phagocytosis protection.</title>
        <authorList>
            <person name="Rocha M.C."/>
            <person name="Fabri J.H.T.M."/>
            <person name="da Silva L.P."/>
            <person name="Angolini C.F.F."/>
            <person name="Bertolini M.C."/>
            <person name="da Cunha A.F."/>
            <person name="Valiante V."/>
            <person name="Goldman G.H."/>
            <person name="Fill T.P."/>
            <person name="Malavazi I."/>
        </authorList>
    </citation>
    <scope>FUNCTION</scope>
</reference>
<evidence type="ECO:0000255" key="1"/>
<evidence type="ECO:0000269" key="2">
    <source>
    </source>
</evidence>
<evidence type="ECO:0000269" key="3">
    <source>
    </source>
</evidence>
<evidence type="ECO:0000269" key="4">
    <source>
    </source>
</evidence>
<evidence type="ECO:0000303" key="5">
    <source>
    </source>
</evidence>
<evidence type="ECO:0000305" key="6"/>
<dbReference type="EMBL" id="AAHF01000006">
    <property type="protein sequence ID" value="EAL89045.1"/>
    <property type="molecule type" value="Genomic_DNA"/>
</dbReference>
<dbReference type="RefSeq" id="XP_751083.1">
    <property type="nucleotide sequence ID" value="XM_745990.1"/>
</dbReference>
<dbReference type="SMR" id="Q4WLW9"/>
<dbReference type="STRING" id="330879.Q4WLW9"/>
<dbReference type="EnsemblFungi" id="EAL89045">
    <property type="protein sequence ID" value="EAL89045"/>
    <property type="gene ID" value="AFUA_6G12040"/>
</dbReference>
<dbReference type="GeneID" id="3508388"/>
<dbReference type="KEGG" id="afm:AFUA_6G12040"/>
<dbReference type="eggNOG" id="KOG0254">
    <property type="taxonomic scope" value="Eukaryota"/>
</dbReference>
<dbReference type="HOGENOM" id="CLU_001265_11_0_1"/>
<dbReference type="InParanoid" id="Q4WLW9"/>
<dbReference type="OMA" id="WTICPEI"/>
<dbReference type="OrthoDB" id="6612291at2759"/>
<dbReference type="Proteomes" id="UP000002530">
    <property type="component" value="Chromosome 6"/>
</dbReference>
<dbReference type="GO" id="GO:0030659">
    <property type="term" value="C:cytoplasmic vesicle membrane"/>
    <property type="evidence" value="ECO:0007669"/>
    <property type="project" value="UniProtKB-SubCell"/>
</dbReference>
<dbReference type="GO" id="GO:0016020">
    <property type="term" value="C:membrane"/>
    <property type="evidence" value="ECO:0000318"/>
    <property type="project" value="GO_Central"/>
</dbReference>
<dbReference type="GO" id="GO:0005351">
    <property type="term" value="F:carbohydrate:proton symporter activity"/>
    <property type="evidence" value="ECO:0000318"/>
    <property type="project" value="GO_Central"/>
</dbReference>
<dbReference type="GO" id="GO:0008643">
    <property type="term" value="P:carbohydrate transport"/>
    <property type="evidence" value="ECO:0000318"/>
    <property type="project" value="GO_Central"/>
</dbReference>
<dbReference type="GO" id="GO:1900781">
    <property type="term" value="P:fumiquinazoline C biosynthetic process"/>
    <property type="evidence" value="ECO:0000315"/>
    <property type="project" value="GO_Central"/>
</dbReference>
<dbReference type="FunFam" id="1.20.1250.20:FF:000078">
    <property type="entry name" value="MFS maltose transporter, putative"/>
    <property type="match status" value="1"/>
</dbReference>
<dbReference type="Gene3D" id="1.20.1250.20">
    <property type="entry name" value="MFS general substrate transporter like domains"/>
    <property type="match status" value="1"/>
</dbReference>
<dbReference type="InterPro" id="IPR020846">
    <property type="entry name" value="MFS_dom"/>
</dbReference>
<dbReference type="InterPro" id="IPR005828">
    <property type="entry name" value="MFS_sugar_transport-like"/>
</dbReference>
<dbReference type="InterPro" id="IPR050360">
    <property type="entry name" value="MFS_Sugar_Transporters"/>
</dbReference>
<dbReference type="InterPro" id="IPR036259">
    <property type="entry name" value="MFS_trans_sf"/>
</dbReference>
<dbReference type="InterPro" id="IPR005829">
    <property type="entry name" value="Sugar_transporter_CS"/>
</dbReference>
<dbReference type="PANTHER" id="PTHR48022">
    <property type="entry name" value="PLASTIDIC GLUCOSE TRANSPORTER 4"/>
    <property type="match status" value="1"/>
</dbReference>
<dbReference type="PANTHER" id="PTHR48022:SF33">
    <property type="entry name" value="SUGAR PERMEASE, PUTATIVE (AFU_ORTHOLOGUE AFUA_6G12040)-RELATED"/>
    <property type="match status" value="1"/>
</dbReference>
<dbReference type="Pfam" id="PF00083">
    <property type="entry name" value="Sugar_tr"/>
    <property type="match status" value="1"/>
</dbReference>
<dbReference type="SUPFAM" id="SSF103473">
    <property type="entry name" value="MFS general substrate transporter"/>
    <property type="match status" value="1"/>
</dbReference>
<dbReference type="PROSITE" id="PS50850">
    <property type="entry name" value="MFS"/>
    <property type="match status" value="1"/>
</dbReference>
<dbReference type="PROSITE" id="PS00216">
    <property type="entry name" value="SUGAR_TRANSPORT_1"/>
    <property type="match status" value="1"/>
</dbReference>